<keyword id="KW-1185">Reference proteome</keyword>
<protein>
    <recommendedName>
        <fullName evidence="1">UPF0213 protein YhbQ</fullName>
    </recommendedName>
</protein>
<dbReference type="EMBL" id="AE005174">
    <property type="protein sequence ID" value="AAG58291.1"/>
    <property type="molecule type" value="Genomic_DNA"/>
</dbReference>
<dbReference type="EMBL" id="BA000007">
    <property type="protein sequence ID" value="BAB37459.1"/>
    <property type="molecule type" value="Genomic_DNA"/>
</dbReference>
<dbReference type="PIR" id="D91133">
    <property type="entry name" value="D91133"/>
</dbReference>
<dbReference type="PIR" id="G85978">
    <property type="entry name" value="G85978"/>
</dbReference>
<dbReference type="RefSeq" id="NP_312063.1">
    <property type="nucleotide sequence ID" value="NC_002695.1"/>
</dbReference>
<dbReference type="RefSeq" id="WP_000189317.1">
    <property type="nucleotide sequence ID" value="NZ_VOAI01000014.1"/>
</dbReference>
<dbReference type="SMR" id="Q8XA92"/>
<dbReference type="STRING" id="155864.Z4516"/>
<dbReference type="GeneID" id="916111"/>
<dbReference type="KEGG" id="ece:Z4516"/>
<dbReference type="KEGG" id="ecs:ECs_4036"/>
<dbReference type="PATRIC" id="fig|386585.9.peg.4215"/>
<dbReference type="eggNOG" id="COG2827">
    <property type="taxonomic scope" value="Bacteria"/>
</dbReference>
<dbReference type="HOGENOM" id="CLU_135650_0_1_6"/>
<dbReference type="OMA" id="VYVEQWP"/>
<dbReference type="Proteomes" id="UP000000558">
    <property type="component" value="Chromosome"/>
</dbReference>
<dbReference type="Proteomes" id="UP000002519">
    <property type="component" value="Chromosome"/>
</dbReference>
<dbReference type="CDD" id="cd10456">
    <property type="entry name" value="GIY-YIG_UPF0213"/>
    <property type="match status" value="1"/>
</dbReference>
<dbReference type="FunFam" id="3.40.1440.10:FF:000002">
    <property type="entry name" value="UPF0213 protein YhbQ"/>
    <property type="match status" value="1"/>
</dbReference>
<dbReference type="Gene3D" id="3.40.1440.10">
    <property type="entry name" value="GIY-YIG endonuclease"/>
    <property type="match status" value="1"/>
</dbReference>
<dbReference type="HAMAP" id="MF_01029">
    <property type="entry name" value="UPF0213"/>
    <property type="match status" value="1"/>
</dbReference>
<dbReference type="InterPro" id="IPR000305">
    <property type="entry name" value="GIY-YIG_endonuc"/>
</dbReference>
<dbReference type="InterPro" id="IPR035901">
    <property type="entry name" value="GIY-YIG_endonuc_sf"/>
</dbReference>
<dbReference type="InterPro" id="IPR050190">
    <property type="entry name" value="UPF0213_domain"/>
</dbReference>
<dbReference type="InterPro" id="IPR022992">
    <property type="entry name" value="UPF0213_GIY-YIG_endonuc"/>
</dbReference>
<dbReference type="PANTHER" id="PTHR34477">
    <property type="entry name" value="UPF0213 PROTEIN YHBQ"/>
    <property type="match status" value="1"/>
</dbReference>
<dbReference type="PANTHER" id="PTHR34477:SF1">
    <property type="entry name" value="UPF0213 PROTEIN YHBQ"/>
    <property type="match status" value="1"/>
</dbReference>
<dbReference type="Pfam" id="PF01541">
    <property type="entry name" value="GIY-YIG"/>
    <property type="match status" value="1"/>
</dbReference>
<dbReference type="SMART" id="SM00465">
    <property type="entry name" value="GIYc"/>
    <property type="match status" value="1"/>
</dbReference>
<dbReference type="SUPFAM" id="SSF82771">
    <property type="entry name" value="GIY-YIG endonuclease"/>
    <property type="match status" value="1"/>
</dbReference>
<dbReference type="PROSITE" id="PS50164">
    <property type="entry name" value="GIY_YIG"/>
    <property type="match status" value="1"/>
</dbReference>
<evidence type="ECO:0000255" key="1">
    <source>
        <dbReference type="HAMAP-Rule" id="MF_01029"/>
    </source>
</evidence>
<gene>
    <name evidence="1" type="primary">yhbQ</name>
    <name type="ordered locus">Z4516</name>
    <name type="ordered locus">ECs4036</name>
</gene>
<name>YHBQ_ECO57</name>
<proteinExistence type="inferred from homology"/>
<organism>
    <name type="scientific">Escherichia coli O157:H7</name>
    <dbReference type="NCBI Taxonomy" id="83334"/>
    <lineage>
        <taxon>Bacteria</taxon>
        <taxon>Pseudomonadati</taxon>
        <taxon>Pseudomonadota</taxon>
        <taxon>Gammaproteobacteria</taxon>
        <taxon>Enterobacterales</taxon>
        <taxon>Enterobacteriaceae</taxon>
        <taxon>Escherichia</taxon>
    </lineage>
</organism>
<accession>Q8XA92</accession>
<reference key="1">
    <citation type="journal article" date="2001" name="Nature">
        <title>Genome sequence of enterohaemorrhagic Escherichia coli O157:H7.</title>
        <authorList>
            <person name="Perna N.T."/>
            <person name="Plunkett G. III"/>
            <person name="Burland V."/>
            <person name="Mau B."/>
            <person name="Glasner J.D."/>
            <person name="Rose D.J."/>
            <person name="Mayhew G.F."/>
            <person name="Evans P.S."/>
            <person name="Gregor J."/>
            <person name="Kirkpatrick H.A."/>
            <person name="Posfai G."/>
            <person name="Hackett J."/>
            <person name="Klink S."/>
            <person name="Boutin A."/>
            <person name="Shao Y."/>
            <person name="Miller L."/>
            <person name="Grotbeck E.J."/>
            <person name="Davis N.W."/>
            <person name="Lim A."/>
            <person name="Dimalanta E.T."/>
            <person name="Potamousis K."/>
            <person name="Apodaca J."/>
            <person name="Anantharaman T.S."/>
            <person name="Lin J."/>
            <person name="Yen G."/>
            <person name="Schwartz D.C."/>
            <person name="Welch R.A."/>
            <person name="Blattner F.R."/>
        </authorList>
    </citation>
    <scope>NUCLEOTIDE SEQUENCE [LARGE SCALE GENOMIC DNA]</scope>
    <source>
        <strain>O157:H7 / EDL933 / ATCC 700927 / EHEC</strain>
    </source>
</reference>
<reference key="2">
    <citation type="journal article" date="2001" name="DNA Res.">
        <title>Complete genome sequence of enterohemorrhagic Escherichia coli O157:H7 and genomic comparison with a laboratory strain K-12.</title>
        <authorList>
            <person name="Hayashi T."/>
            <person name="Makino K."/>
            <person name="Ohnishi M."/>
            <person name="Kurokawa K."/>
            <person name="Ishii K."/>
            <person name="Yokoyama K."/>
            <person name="Han C.-G."/>
            <person name="Ohtsubo E."/>
            <person name="Nakayama K."/>
            <person name="Murata T."/>
            <person name="Tanaka M."/>
            <person name="Tobe T."/>
            <person name="Iida T."/>
            <person name="Takami H."/>
            <person name="Honda T."/>
            <person name="Sasakawa C."/>
            <person name="Ogasawara N."/>
            <person name="Yasunaga T."/>
            <person name="Kuhara S."/>
            <person name="Shiba T."/>
            <person name="Hattori M."/>
            <person name="Shinagawa H."/>
        </authorList>
    </citation>
    <scope>NUCLEOTIDE SEQUENCE [LARGE SCALE GENOMIC DNA]</scope>
    <source>
        <strain>O157:H7 / Sakai / RIMD 0509952 / EHEC</strain>
    </source>
</reference>
<sequence>MTPWFLYLIRTADNKLYTGITTDVERRYQQHQSGKGAKALRGKGELTLAFSAPVGDRSLALRAEYRVKQLTKRQKERLVAEGAGFAKLLSSLQTPEIKSD</sequence>
<comment type="similarity">
    <text evidence="1">Belongs to the UPF0213 family.</text>
</comment>
<feature type="chain" id="PRO_0000161359" description="UPF0213 protein YhbQ">
    <location>
        <begin position="1"/>
        <end position="100"/>
    </location>
</feature>
<feature type="domain" description="GIY-YIG" evidence="1">
    <location>
        <begin position="2"/>
        <end position="77"/>
    </location>
</feature>